<accession>P0C9F9</accession>
<organism>
    <name type="scientific">African swine fever virus (isolate Tick/Malawi/Lil 20-1/1983)</name>
    <name type="common">ASFV</name>
    <dbReference type="NCBI Taxonomy" id="10500"/>
    <lineage>
        <taxon>Viruses</taxon>
        <taxon>Varidnaviria</taxon>
        <taxon>Bamfordvirae</taxon>
        <taxon>Nucleocytoviricota</taxon>
        <taxon>Pokkesviricetes</taxon>
        <taxon>Asfuvirales</taxon>
        <taxon>Asfarviridae</taxon>
        <taxon>Asfivirus</taxon>
        <taxon>African swine fever virus</taxon>
    </lineage>
</organism>
<name>1003L_ASFM2</name>
<sequence length="147" mass="17472">MGNHLDGSYQPNMVMSIEDKQNKYNEAKERSKVCNKVYINQSGKIDKKELKRIKKLDFFYSQKNDDEIERMFFNMPNGTFLLTDDVTHENIYIAQKDLENGSLNIAKLEFKGEALYINGKNYFFLENYLKTFEDIYKYPLTNFNENK</sequence>
<organismHost>
    <name type="scientific">Ornithodoros</name>
    <name type="common">relapsing fever ticks</name>
    <dbReference type="NCBI Taxonomy" id="6937"/>
</organismHost>
<organismHost>
    <name type="scientific">Phacochoerus aethiopicus</name>
    <name type="common">Warthog</name>
    <dbReference type="NCBI Taxonomy" id="85517"/>
</organismHost>
<organismHost>
    <name type="scientific">Phacochoerus africanus</name>
    <name type="common">Warthog</name>
    <dbReference type="NCBI Taxonomy" id="41426"/>
</organismHost>
<organismHost>
    <name type="scientific">Potamochoerus larvatus</name>
    <name type="common">Bushpig</name>
    <dbReference type="NCBI Taxonomy" id="273792"/>
</organismHost>
<organismHost>
    <name type="scientific">Sus scrofa</name>
    <name type="common">Pig</name>
    <dbReference type="NCBI Taxonomy" id="9823"/>
</organismHost>
<proteinExistence type="inferred from homology"/>
<evidence type="ECO:0000250" key="1"/>
<evidence type="ECO:0000305" key="2"/>
<dbReference type="EMBL" id="AY261361">
    <property type="status" value="NOT_ANNOTATED_CDS"/>
    <property type="molecule type" value="Genomic_DNA"/>
</dbReference>
<dbReference type="SMR" id="P0C9F9"/>
<dbReference type="Proteomes" id="UP000000860">
    <property type="component" value="Segment"/>
</dbReference>
<gene>
    <name type="ordered locus">Mal-159</name>
</gene>
<protein>
    <recommendedName>
        <fullName>Protein MGF 100-3L</fullName>
    </recommendedName>
</protein>
<feature type="chain" id="PRO_0000373181" description="Protein MGF 100-3L">
    <location>
        <begin position="1"/>
        <end position="147"/>
    </location>
</feature>
<keyword id="KW-0244">Early protein</keyword>
<comment type="function">
    <text evidence="1">Plays a role in virus cell tropism, and may be required for efficient virus replication in macrophages.</text>
</comment>
<comment type="induction">
    <text evidence="2">Expressed in the early phase of the viral replicative cycle.</text>
</comment>
<comment type="similarity">
    <text evidence="2">Belongs to the asfivirus MGF 100 family.</text>
</comment>
<reference key="1">
    <citation type="submission" date="2003-03" db="EMBL/GenBank/DDBJ databases">
        <title>African swine fever virus genomes.</title>
        <authorList>
            <person name="Kutish G.F."/>
            <person name="Rock D.L."/>
        </authorList>
    </citation>
    <scope>NUCLEOTIDE SEQUENCE [LARGE SCALE GENOMIC DNA]</scope>
</reference>